<organism>
    <name type="scientific">Solibacter usitatus (strain Ellin6076)</name>
    <dbReference type="NCBI Taxonomy" id="234267"/>
    <lineage>
        <taxon>Bacteria</taxon>
        <taxon>Pseudomonadati</taxon>
        <taxon>Acidobacteriota</taxon>
        <taxon>Terriglobia</taxon>
        <taxon>Bryobacterales</taxon>
        <taxon>Solibacteraceae</taxon>
        <taxon>Candidatus Solibacter</taxon>
    </lineage>
</organism>
<reference key="1">
    <citation type="journal article" date="2009" name="Appl. Environ. Microbiol.">
        <title>Three genomes from the phylum Acidobacteria provide insight into the lifestyles of these microorganisms in soils.</title>
        <authorList>
            <person name="Ward N.L."/>
            <person name="Challacombe J.F."/>
            <person name="Janssen P.H."/>
            <person name="Henrissat B."/>
            <person name="Coutinho P.M."/>
            <person name="Wu M."/>
            <person name="Xie G."/>
            <person name="Haft D.H."/>
            <person name="Sait M."/>
            <person name="Badger J."/>
            <person name="Barabote R.D."/>
            <person name="Bradley B."/>
            <person name="Brettin T.S."/>
            <person name="Brinkac L.M."/>
            <person name="Bruce D."/>
            <person name="Creasy T."/>
            <person name="Daugherty S.C."/>
            <person name="Davidsen T.M."/>
            <person name="DeBoy R.T."/>
            <person name="Detter J.C."/>
            <person name="Dodson R.J."/>
            <person name="Durkin A.S."/>
            <person name="Ganapathy A."/>
            <person name="Gwinn-Giglio M."/>
            <person name="Han C.S."/>
            <person name="Khouri H."/>
            <person name="Kiss H."/>
            <person name="Kothari S.P."/>
            <person name="Madupu R."/>
            <person name="Nelson K.E."/>
            <person name="Nelson W.C."/>
            <person name="Paulsen I."/>
            <person name="Penn K."/>
            <person name="Ren Q."/>
            <person name="Rosovitz M.J."/>
            <person name="Selengut J.D."/>
            <person name="Shrivastava S."/>
            <person name="Sullivan S.A."/>
            <person name="Tapia R."/>
            <person name="Thompson L.S."/>
            <person name="Watkins K.L."/>
            <person name="Yang Q."/>
            <person name="Yu C."/>
            <person name="Zafar N."/>
            <person name="Zhou L."/>
            <person name="Kuske C.R."/>
        </authorList>
    </citation>
    <scope>NUCLEOTIDE SEQUENCE [LARGE SCALE GENOMIC DNA]</scope>
    <source>
        <strain>Ellin6076</strain>
    </source>
</reference>
<protein>
    <recommendedName>
        <fullName evidence="1">Ribonuclease HII</fullName>
        <shortName evidence="1">RNase HII</shortName>
        <ecNumber evidence="1">3.1.26.4</ecNumber>
    </recommendedName>
</protein>
<proteinExistence type="inferred from homology"/>
<comment type="function">
    <text evidence="1">Endonuclease that specifically degrades the RNA of RNA-DNA hybrids.</text>
</comment>
<comment type="catalytic activity">
    <reaction evidence="1">
        <text>Endonucleolytic cleavage to 5'-phosphomonoester.</text>
        <dbReference type="EC" id="3.1.26.4"/>
    </reaction>
</comment>
<comment type="cofactor">
    <cofactor evidence="1">
        <name>Mn(2+)</name>
        <dbReference type="ChEBI" id="CHEBI:29035"/>
    </cofactor>
    <cofactor evidence="1">
        <name>Mg(2+)</name>
        <dbReference type="ChEBI" id="CHEBI:18420"/>
    </cofactor>
    <text evidence="1">Manganese or magnesium. Binds 1 divalent metal ion per monomer in the absence of substrate. May bind a second metal ion after substrate binding.</text>
</comment>
<comment type="subcellular location">
    <subcellularLocation>
        <location evidence="1">Cytoplasm</location>
    </subcellularLocation>
</comment>
<comment type="similarity">
    <text evidence="1">Belongs to the RNase HII family.</text>
</comment>
<gene>
    <name evidence="1" type="primary">rnhB</name>
    <name type="ordered locus">Acid_2565</name>
</gene>
<evidence type="ECO:0000255" key="1">
    <source>
        <dbReference type="HAMAP-Rule" id="MF_00052"/>
    </source>
</evidence>
<evidence type="ECO:0000255" key="2">
    <source>
        <dbReference type="PROSITE-ProRule" id="PRU01319"/>
    </source>
</evidence>
<sequence>MRPIPAGGKFRCEATLERELRARGFRAVAGVDEVGRGALFGAVFAGAVILSEERPIRGLNDSKQLDPERREVLAGRIRERAVAWSIAAVDASTIDSINIYQASRMAMRIAVSRLSPAPDFLLVDAVPLEFAVPQRALIKGDERCHAIAAASILAKVARDECMRVWDKVFPEYGLASHKGYSTPEHYRAIEQYGPTPLHRLSFEPVRAHSRFPLDHDRQLDLFDTAGAA</sequence>
<accession>Q024M2</accession>
<name>RNH2_SOLUE</name>
<dbReference type="EC" id="3.1.26.4" evidence="1"/>
<dbReference type="EMBL" id="CP000473">
    <property type="protein sequence ID" value="ABJ83554.1"/>
    <property type="molecule type" value="Genomic_DNA"/>
</dbReference>
<dbReference type="SMR" id="Q024M2"/>
<dbReference type="FunCoup" id="Q024M2">
    <property type="interactions" value="358"/>
</dbReference>
<dbReference type="STRING" id="234267.Acid_2565"/>
<dbReference type="KEGG" id="sus:Acid_2565"/>
<dbReference type="eggNOG" id="COG0164">
    <property type="taxonomic scope" value="Bacteria"/>
</dbReference>
<dbReference type="HOGENOM" id="CLU_036532_2_1_0"/>
<dbReference type="InParanoid" id="Q024M2"/>
<dbReference type="OrthoDB" id="9803420at2"/>
<dbReference type="GO" id="GO:0005737">
    <property type="term" value="C:cytoplasm"/>
    <property type="evidence" value="ECO:0007669"/>
    <property type="project" value="UniProtKB-SubCell"/>
</dbReference>
<dbReference type="GO" id="GO:0032299">
    <property type="term" value="C:ribonuclease H2 complex"/>
    <property type="evidence" value="ECO:0007669"/>
    <property type="project" value="TreeGrafter"/>
</dbReference>
<dbReference type="GO" id="GO:0030145">
    <property type="term" value="F:manganese ion binding"/>
    <property type="evidence" value="ECO:0007669"/>
    <property type="project" value="UniProtKB-UniRule"/>
</dbReference>
<dbReference type="GO" id="GO:0003723">
    <property type="term" value="F:RNA binding"/>
    <property type="evidence" value="ECO:0007669"/>
    <property type="project" value="InterPro"/>
</dbReference>
<dbReference type="GO" id="GO:0004523">
    <property type="term" value="F:RNA-DNA hybrid ribonuclease activity"/>
    <property type="evidence" value="ECO:0007669"/>
    <property type="project" value="UniProtKB-UniRule"/>
</dbReference>
<dbReference type="GO" id="GO:0043137">
    <property type="term" value="P:DNA replication, removal of RNA primer"/>
    <property type="evidence" value="ECO:0007669"/>
    <property type="project" value="TreeGrafter"/>
</dbReference>
<dbReference type="GO" id="GO:0006298">
    <property type="term" value="P:mismatch repair"/>
    <property type="evidence" value="ECO:0007669"/>
    <property type="project" value="TreeGrafter"/>
</dbReference>
<dbReference type="CDD" id="cd07182">
    <property type="entry name" value="RNase_HII_bacteria_HII_like"/>
    <property type="match status" value="1"/>
</dbReference>
<dbReference type="FunFam" id="3.30.420.10:FF:000006">
    <property type="entry name" value="Ribonuclease HII"/>
    <property type="match status" value="1"/>
</dbReference>
<dbReference type="Gene3D" id="3.30.420.10">
    <property type="entry name" value="Ribonuclease H-like superfamily/Ribonuclease H"/>
    <property type="match status" value="1"/>
</dbReference>
<dbReference type="HAMAP" id="MF_00052_B">
    <property type="entry name" value="RNase_HII_B"/>
    <property type="match status" value="1"/>
</dbReference>
<dbReference type="InterPro" id="IPR022898">
    <property type="entry name" value="RNase_HII"/>
</dbReference>
<dbReference type="InterPro" id="IPR001352">
    <property type="entry name" value="RNase_HII/HIII"/>
</dbReference>
<dbReference type="InterPro" id="IPR024567">
    <property type="entry name" value="RNase_HII/HIII_dom"/>
</dbReference>
<dbReference type="InterPro" id="IPR012337">
    <property type="entry name" value="RNaseH-like_sf"/>
</dbReference>
<dbReference type="InterPro" id="IPR036397">
    <property type="entry name" value="RNaseH_sf"/>
</dbReference>
<dbReference type="NCBIfam" id="NF000594">
    <property type="entry name" value="PRK00015.1-1"/>
    <property type="match status" value="1"/>
</dbReference>
<dbReference type="NCBIfam" id="NF000595">
    <property type="entry name" value="PRK00015.1-3"/>
    <property type="match status" value="1"/>
</dbReference>
<dbReference type="PANTHER" id="PTHR10954">
    <property type="entry name" value="RIBONUCLEASE H2 SUBUNIT A"/>
    <property type="match status" value="1"/>
</dbReference>
<dbReference type="PANTHER" id="PTHR10954:SF18">
    <property type="entry name" value="RIBONUCLEASE HII"/>
    <property type="match status" value="1"/>
</dbReference>
<dbReference type="Pfam" id="PF01351">
    <property type="entry name" value="RNase_HII"/>
    <property type="match status" value="1"/>
</dbReference>
<dbReference type="SUPFAM" id="SSF53098">
    <property type="entry name" value="Ribonuclease H-like"/>
    <property type="match status" value="1"/>
</dbReference>
<dbReference type="PROSITE" id="PS51975">
    <property type="entry name" value="RNASE_H_2"/>
    <property type="match status" value="1"/>
</dbReference>
<feature type="chain" id="PRO_0000334958" description="Ribonuclease HII">
    <location>
        <begin position="1"/>
        <end position="228"/>
    </location>
</feature>
<feature type="domain" description="RNase H type-2" evidence="2">
    <location>
        <begin position="26"/>
        <end position="214"/>
    </location>
</feature>
<feature type="binding site" evidence="1">
    <location>
        <position position="32"/>
    </location>
    <ligand>
        <name>a divalent metal cation</name>
        <dbReference type="ChEBI" id="CHEBI:60240"/>
    </ligand>
</feature>
<feature type="binding site" evidence="1">
    <location>
        <position position="33"/>
    </location>
    <ligand>
        <name>a divalent metal cation</name>
        <dbReference type="ChEBI" id="CHEBI:60240"/>
    </ligand>
</feature>
<feature type="binding site" evidence="1">
    <location>
        <position position="124"/>
    </location>
    <ligand>
        <name>a divalent metal cation</name>
        <dbReference type="ChEBI" id="CHEBI:60240"/>
    </ligand>
</feature>
<keyword id="KW-0963">Cytoplasm</keyword>
<keyword id="KW-0255">Endonuclease</keyword>
<keyword id="KW-0378">Hydrolase</keyword>
<keyword id="KW-0464">Manganese</keyword>
<keyword id="KW-0479">Metal-binding</keyword>
<keyword id="KW-0540">Nuclease</keyword>